<reference key="1">
    <citation type="journal article" date="2003" name="Proc. Natl. Acad. Sci. U.S.A.">
        <title>Complete genome sequence and analysis of Wolinella succinogenes.</title>
        <authorList>
            <person name="Baar C."/>
            <person name="Eppinger M."/>
            <person name="Raddatz G."/>
            <person name="Simon J."/>
            <person name="Lanz C."/>
            <person name="Klimmek O."/>
            <person name="Nandakumar R."/>
            <person name="Gross R."/>
            <person name="Rosinus A."/>
            <person name="Keller H."/>
            <person name="Jagtap P."/>
            <person name="Linke B."/>
            <person name="Meyer F."/>
            <person name="Lederer H."/>
            <person name="Schuster S.C."/>
        </authorList>
    </citation>
    <scope>NUCLEOTIDE SEQUENCE [LARGE SCALE GENOMIC DNA]</scope>
    <source>
        <strain>ATCC 29543 / DSM 1740 / CCUG 13145 / JCM 31913 / LMG 7466 / NCTC 11488 / FDC 602W</strain>
    </source>
</reference>
<comment type="function">
    <text evidence="1">The RuvA-RuvB-RuvC complex processes Holliday junction (HJ) DNA during genetic recombination and DNA repair, while the RuvA-RuvB complex plays an important role in the rescue of blocked DNA replication forks via replication fork reversal (RFR). RuvA specifically binds to HJ cruciform DNA, conferring on it an open structure. The RuvB hexamer acts as an ATP-dependent pump, pulling dsDNA into and through the RuvAB complex. RuvB forms 2 homohexamers on either side of HJ DNA bound by 1 or 2 RuvA tetramers; 4 subunits per hexamer contact DNA at a time. Coordinated motions by a converter formed by DNA-disengaged RuvB subunits stimulates ATP hydrolysis and nucleotide exchange. Immobilization of the converter enables RuvB to convert the ATP-contained energy into a lever motion, pulling 2 nucleotides of DNA out of the RuvA tetramer per ATP hydrolyzed, thus driving DNA branch migration. The RuvB motors rotate together with the DNA substrate, which together with the progressing nucleotide cycle form the mechanistic basis for DNA recombination by continuous HJ branch migration. Branch migration allows RuvC to scan DNA until it finds its consensus sequence, where it cleaves and resolves cruciform DNA.</text>
</comment>
<comment type="catalytic activity">
    <reaction evidence="1">
        <text>ATP + H2O = ADP + phosphate + H(+)</text>
        <dbReference type="Rhea" id="RHEA:13065"/>
        <dbReference type="ChEBI" id="CHEBI:15377"/>
        <dbReference type="ChEBI" id="CHEBI:15378"/>
        <dbReference type="ChEBI" id="CHEBI:30616"/>
        <dbReference type="ChEBI" id="CHEBI:43474"/>
        <dbReference type="ChEBI" id="CHEBI:456216"/>
    </reaction>
</comment>
<comment type="subunit">
    <text evidence="1">Homohexamer. Forms an RuvA(8)-RuvB(12)-Holliday junction (HJ) complex. HJ DNA is sandwiched between 2 RuvA tetramers; dsDNA enters through RuvA and exits via RuvB. An RuvB hexamer assembles on each DNA strand where it exits the tetramer. Each RuvB hexamer is contacted by two RuvA subunits (via domain III) on 2 adjacent RuvB subunits; this complex drives branch migration. In the full resolvosome a probable DNA-RuvA(4)-RuvB(12)-RuvC(2) complex forms which resolves the HJ.</text>
</comment>
<comment type="subcellular location">
    <subcellularLocation>
        <location evidence="1">Cytoplasm</location>
    </subcellularLocation>
</comment>
<comment type="domain">
    <text evidence="1">Has 3 domains, the large (RuvB-L) and small ATPase (RuvB-S) domains and the C-terminal head (RuvB-H) domain. The head domain binds DNA, while the ATPase domains jointly bind ATP, ADP or are empty depending on the state of the subunit in the translocation cycle. During a single DNA translocation step the structure of each domain remains the same, but their relative positions change.</text>
</comment>
<comment type="similarity">
    <text evidence="1">Belongs to the RuvB family.</text>
</comment>
<keyword id="KW-0067">ATP-binding</keyword>
<keyword id="KW-0963">Cytoplasm</keyword>
<keyword id="KW-0227">DNA damage</keyword>
<keyword id="KW-0233">DNA recombination</keyword>
<keyword id="KW-0234">DNA repair</keyword>
<keyword id="KW-0238">DNA-binding</keyword>
<keyword id="KW-0378">Hydrolase</keyword>
<keyword id="KW-0547">Nucleotide-binding</keyword>
<keyword id="KW-1185">Reference proteome</keyword>
<proteinExistence type="inferred from homology"/>
<dbReference type="EC" id="3.6.4.-" evidence="1"/>
<dbReference type="EMBL" id="BX571661">
    <property type="protein sequence ID" value="CAE10840.1"/>
    <property type="molecule type" value="Genomic_DNA"/>
</dbReference>
<dbReference type="RefSeq" id="WP_011139623.1">
    <property type="nucleotide sequence ID" value="NC_005090.1"/>
</dbReference>
<dbReference type="SMR" id="Q7M879"/>
<dbReference type="STRING" id="273121.WS1825"/>
<dbReference type="KEGG" id="wsu:WS1825"/>
<dbReference type="eggNOG" id="COG2255">
    <property type="taxonomic scope" value="Bacteria"/>
</dbReference>
<dbReference type="HOGENOM" id="CLU_055599_1_0_7"/>
<dbReference type="Proteomes" id="UP000000422">
    <property type="component" value="Chromosome"/>
</dbReference>
<dbReference type="GO" id="GO:0005737">
    <property type="term" value="C:cytoplasm"/>
    <property type="evidence" value="ECO:0007669"/>
    <property type="project" value="UniProtKB-SubCell"/>
</dbReference>
<dbReference type="GO" id="GO:0048476">
    <property type="term" value="C:Holliday junction resolvase complex"/>
    <property type="evidence" value="ECO:0007669"/>
    <property type="project" value="UniProtKB-UniRule"/>
</dbReference>
<dbReference type="GO" id="GO:0005524">
    <property type="term" value="F:ATP binding"/>
    <property type="evidence" value="ECO:0007669"/>
    <property type="project" value="UniProtKB-UniRule"/>
</dbReference>
<dbReference type="GO" id="GO:0016887">
    <property type="term" value="F:ATP hydrolysis activity"/>
    <property type="evidence" value="ECO:0007669"/>
    <property type="project" value="InterPro"/>
</dbReference>
<dbReference type="GO" id="GO:0000400">
    <property type="term" value="F:four-way junction DNA binding"/>
    <property type="evidence" value="ECO:0007669"/>
    <property type="project" value="UniProtKB-UniRule"/>
</dbReference>
<dbReference type="GO" id="GO:0009378">
    <property type="term" value="F:four-way junction helicase activity"/>
    <property type="evidence" value="ECO:0007669"/>
    <property type="project" value="InterPro"/>
</dbReference>
<dbReference type="GO" id="GO:0006310">
    <property type="term" value="P:DNA recombination"/>
    <property type="evidence" value="ECO:0007669"/>
    <property type="project" value="UniProtKB-UniRule"/>
</dbReference>
<dbReference type="GO" id="GO:0006281">
    <property type="term" value="P:DNA repair"/>
    <property type="evidence" value="ECO:0007669"/>
    <property type="project" value="UniProtKB-UniRule"/>
</dbReference>
<dbReference type="CDD" id="cd00009">
    <property type="entry name" value="AAA"/>
    <property type="match status" value="1"/>
</dbReference>
<dbReference type="Gene3D" id="1.10.8.60">
    <property type="match status" value="1"/>
</dbReference>
<dbReference type="Gene3D" id="3.40.50.300">
    <property type="entry name" value="P-loop containing nucleotide triphosphate hydrolases"/>
    <property type="match status" value="1"/>
</dbReference>
<dbReference type="Gene3D" id="1.10.10.10">
    <property type="entry name" value="Winged helix-like DNA-binding domain superfamily/Winged helix DNA-binding domain"/>
    <property type="match status" value="1"/>
</dbReference>
<dbReference type="HAMAP" id="MF_00016">
    <property type="entry name" value="DNA_HJ_migration_RuvB"/>
    <property type="match status" value="1"/>
</dbReference>
<dbReference type="InterPro" id="IPR003593">
    <property type="entry name" value="AAA+_ATPase"/>
</dbReference>
<dbReference type="InterPro" id="IPR041445">
    <property type="entry name" value="AAA_lid_4"/>
</dbReference>
<dbReference type="InterPro" id="IPR004605">
    <property type="entry name" value="DNA_helicase_Holl-junc_RuvB"/>
</dbReference>
<dbReference type="InterPro" id="IPR027417">
    <property type="entry name" value="P-loop_NTPase"/>
</dbReference>
<dbReference type="InterPro" id="IPR008824">
    <property type="entry name" value="RuvB-like_N"/>
</dbReference>
<dbReference type="InterPro" id="IPR008823">
    <property type="entry name" value="RuvB_C"/>
</dbReference>
<dbReference type="InterPro" id="IPR036388">
    <property type="entry name" value="WH-like_DNA-bd_sf"/>
</dbReference>
<dbReference type="InterPro" id="IPR036390">
    <property type="entry name" value="WH_DNA-bd_sf"/>
</dbReference>
<dbReference type="NCBIfam" id="NF000868">
    <property type="entry name" value="PRK00080.1"/>
    <property type="match status" value="1"/>
</dbReference>
<dbReference type="NCBIfam" id="TIGR00635">
    <property type="entry name" value="ruvB"/>
    <property type="match status" value="1"/>
</dbReference>
<dbReference type="PANTHER" id="PTHR42848">
    <property type="match status" value="1"/>
</dbReference>
<dbReference type="PANTHER" id="PTHR42848:SF1">
    <property type="entry name" value="HOLLIDAY JUNCTION BRANCH MIGRATION COMPLEX SUBUNIT RUVB"/>
    <property type="match status" value="1"/>
</dbReference>
<dbReference type="Pfam" id="PF17864">
    <property type="entry name" value="AAA_lid_4"/>
    <property type="match status" value="1"/>
</dbReference>
<dbReference type="Pfam" id="PF05491">
    <property type="entry name" value="RuvB_C"/>
    <property type="match status" value="1"/>
</dbReference>
<dbReference type="Pfam" id="PF05496">
    <property type="entry name" value="RuvB_N"/>
    <property type="match status" value="1"/>
</dbReference>
<dbReference type="SMART" id="SM00382">
    <property type="entry name" value="AAA"/>
    <property type="match status" value="1"/>
</dbReference>
<dbReference type="SUPFAM" id="SSF52540">
    <property type="entry name" value="P-loop containing nucleoside triphosphate hydrolases"/>
    <property type="match status" value="1"/>
</dbReference>
<dbReference type="SUPFAM" id="SSF46785">
    <property type="entry name" value="Winged helix' DNA-binding domain"/>
    <property type="match status" value="1"/>
</dbReference>
<sequence>MERIIEIEKMELEEAEEVSLRPSGWDDYIGQEKIKRNLGVFIEAAKRRGEGLDHILFFGPPGLGKTTLAHIISHEMGANIKVTTAPMIEKAGDLAAILTNLSEGDILFIDEIHRLSASIEEILYPAMEDFRLDIIIGSGPAAQTVKIDLPRFTLIGATTRAGMISKPLRERFGMNFWMQFYNIEELSQIITLASIKLKKRCLLESAKEIARRSRGTPRVALRLLRRVRDFAEVANEEEIKIEQARYALHELGVNDHGFDDLDLRYLRILVQSKGRPVGLGTIAAAMSEDEGTIEDVVEPYLLAHGYLERTARGRVATRQTYELFSLPFEPNATLF</sequence>
<organism>
    <name type="scientific">Wolinella succinogenes (strain ATCC 29543 / DSM 1740 / CCUG 13145 / JCM 31913 / LMG 7466 / NCTC 11488 / FDC 602W)</name>
    <name type="common">Vibrio succinogenes</name>
    <dbReference type="NCBI Taxonomy" id="273121"/>
    <lineage>
        <taxon>Bacteria</taxon>
        <taxon>Pseudomonadati</taxon>
        <taxon>Campylobacterota</taxon>
        <taxon>Epsilonproteobacteria</taxon>
        <taxon>Campylobacterales</taxon>
        <taxon>Helicobacteraceae</taxon>
        <taxon>Wolinella</taxon>
    </lineage>
</organism>
<accession>Q7M879</accession>
<feature type="chain" id="PRO_0000165632" description="Holliday junction branch migration complex subunit RuvB">
    <location>
        <begin position="1"/>
        <end position="335"/>
    </location>
</feature>
<feature type="region of interest" description="Large ATPase domain (RuvB-L)" evidence="1">
    <location>
        <begin position="1"/>
        <end position="181"/>
    </location>
</feature>
<feature type="region of interest" description="Small ATPAse domain (RuvB-S)" evidence="1">
    <location>
        <begin position="182"/>
        <end position="252"/>
    </location>
</feature>
<feature type="region of interest" description="Head domain (RuvB-H)" evidence="1">
    <location>
        <begin position="255"/>
        <end position="335"/>
    </location>
</feature>
<feature type="binding site" evidence="1">
    <location>
        <position position="20"/>
    </location>
    <ligand>
        <name>ATP</name>
        <dbReference type="ChEBI" id="CHEBI:30616"/>
    </ligand>
</feature>
<feature type="binding site" evidence="1">
    <location>
        <position position="21"/>
    </location>
    <ligand>
        <name>ATP</name>
        <dbReference type="ChEBI" id="CHEBI:30616"/>
    </ligand>
</feature>
<feature type="binding site" evidence="1">
    <location>
        <position position="62"/>
    </location>
    <ligand>
        <name>ATP</name>
        <dbReference type="ChEBI" id="CHEBI:30616"/>
    </ligand>
</feature>
<feature type="binding site" evidence="1">
    <location>
        <position position="65"/>
    </location>
    <ligand>
        <name>ATP</name>
        <dbReference type="ChEBI" id="CHEBI:30616"/>
    </ligand>
</feature>
<feature type="binding site" evidence="1">
    <location>
        <position position="66"/>
    </location>
    <ligand>
        <name>ATP</name>
        <dbReference type="ChEBI" id="CHEBI:30616"/>
    </ligand>
</feature>
<feature type="binding site" evidence="1">
    <location>
        <position position="66"/>
    </location>
    <ligand>
        <name>Mg(2+)</name>
        <dbReference type="ChEBI" id="CHEBI:18420"/>
    </ligand>
</feature>
<feature type="binding site" evidence="1">
    <location>
        <position position="67"/>
    </location>
    <ligand>
        <name>ATP</name>
        <dbReference type="ChEBI" id="CHEBI:30616"/>
    </ligand>
</feature>
<feature type="binding site" evidence="1">
    <location>
        <begin position="128"/>
        <end position="130"/>
    </location>
    <ligand>
        <name>ATP</name>
        <dbReference type="ChEBI" id="CHEBI:30616"/>
    </ligand>
</feature>
<feature type="binding site" evidence="1">
    <location>
        <position position="171"/>
    </location>
    <ligand>
        <name>ATP</name>
        <dbReference type="ChEBI" id="CHEBI:30616"/>
    </ligand>
</feature>
<feature type="binding site" evidence="1">
    <location>
        <position position="181"/>
    </location>
    <ligand>
        <name>ATP</name>
        <dbReference type="ChEBI" id="CHEBI:30616"/>
    </ligand>
</feature>
<feature type="binding site" evidence="1">
    <location>
        <position position="218"/>
    </location>
    <ligand>
        <name>ATP</name>
        <dbReference type="ChEBI" id="CHEBI:30616"/>
    </ligand>
</feature>
<feature type="binding site" evidence="1">
    <location>
        <position position="309"/>
    </location>
    <ligand>
        <name>DNA</name>
        <dbReference type="ChEBI" id="CHEBI:16991"/>
    </ligand>
</feature>
<feature type="binding site" evidence="1">
    <location>
        <position position="314"/>
    </location>
    <ligand>
        <name>DNA</name>
        <dbReference type="ChEBI" id="CHEBI:16991"/>
    </ligand>
</feature>
<gene>
    <name evidence="1" type="primary">ruvB</name>
    <name type="ordered locus">WS1825</name>
</gene>
<evidence type="ECO:0000255" key="1">
    <source>
        <dbReference type="HAMAP-Rule" id="MF_00016"/>
    </source>
</evidence>
<protein>
    <recommendedName>
        <fullName evidence="1">Holliday junction branch migration complex subunit RuvB</fullName>
        <ecNumber evidence="1">3.6.4.-</ecNumber>
    </recommendedName>
</protein>
<name>RUVB_WOLSU</name>